<name>TUSD_ECO57</name>
<accession>Q8X883</accession>
<gene>
    <name evidence="1" type="primary">tusD</name>
    <name type="ordered locus">Z4703</name>
    <name type="ordered locus">ECs4196</name>
</gene>
<sequence length="128" mass="13679">MRFAIVVTGPAYGTQQASSAFQFAQALIAEGHKLSSVFFYREGVYNANHLTSPASDEFDLVRGWQQLNAQHGVALNICVAAALRRGVVDEMEAGRLGLASSNLQQGFTLSGLGALAEASLTCDRVVQF</sequence>
<proteinExistence type="inferred from homology"/>
<protein>
    <recommendedName>
        <fullName evidence="1">Sulfurtransferase TusD</fullName>
        <ecNumber evidence="1">2.8.1.-</ecNumber>
    </recommendedName>
    <alternativeName>
        <fullName evidence="1">tRNA 2-thiouridine synthesizing protein D</fullName>
    </alternativeName>
</protein>
<feature type="chain" id="PRO_0000214726" description="Sulfurtransferase TusD">
    <location>
        <begin position="1"/>
        <end position="128"/>
    </location>
</feature>
<feature type="active site" description="Cysteine persulfide intermediate" evidence="1">
    <location>
        <position position="78"/>
    </location>
</feature>
<keyword id="KW-0963">Cytoplasm</keyword>
<keyword id="KW-1185">Reference proteome</keyword>
<keyword id="KW-0808">Transferase</keyword>
<keyword id="KW-0819">tRNA processing</keyword>
<comment type="function">
    <text evidence="1">Part of a sulfur-relay system required for 2-thiolation of 5-methylaminomethyl-2-thiouridine (mnm(5)s(2)U) at tRNA wobble positions. Accepts sulfur from TusA and transfers it in turn to TusE.</text>
</comment>
<comment type="subunit">
    <text evidence="1">Heterohexamer, formed by a dimer of trimers. The hexameric TusBCD complex contains 2 copies each of TusB, TusC and TusD. The TusBCD complex interacts with TusE.</text>
</comment>
<comment type="subcellular location">
    <subcellularLocation>
        <location evidence="1">Cytoplasm</location>
    </subcellularLocation>
</comment>
<comment type="similarity">
    <text evidence="1">Belongs to the DsrE/TusD family.</text>
</comment>
<organism>
    <name type="scientific">Escherichia coli O157:H7</name>
    <dbReference type="NCBI Taxonomy" id="83334"/>
    <lineage>
        <taxon>Bacteria</taxon>
        <taxon>Pseudomonadati</taxon>
        <taxon>Pseudomonadota</taxon>
        <taxon>Gammaproteobacteria</taxon>
        <taxon>Enterobacterales</taxon>
        <taxon>Enterobacteriaceae</taxon>
        <taxon>Escherichia</taxon>
    </lineage>
</organism>
<evidence type="ECO:0000255" key="1">
    <source>
        <dbReference type="HAMAP-Rule" id="MF_00390"/>
    </source>
</evidence>
<reference key="1">
    <citation type="journal article" date="2001" name="Nature">
        <title>Genome sequence of enterohaemorrhagic Escherichia coli O157:H7.</title>
        <authorList>
            <person name="Perna N.T."/>
            <person name="Plunkett G. III"/>
            <person name="Burland V."/>
            <person name="Mau B."/>
            <person name="Glasner J.D."/>
            <person name="Rose D.J."/>
            <person name="Mayhew G.F."/>
            <person name="Evans P.S."/>
            <person name="Gregor J."/>
            <person name="Kirkpatrick H.A."/>
            <person name="Posfai G."/>
            <person name="Hackett J."/>
            <person name="Klink S."/>
            <person name="Boutin A."/>
            <person name="Shao Y."/>
            <person name="Miller L."/>
            <person name="Grotbeck E.J."/>
            <person name="Davis N.W."/>
            <person name="Lim A."/>
            <person name="Dimalanta E.T."/>
            <person name="Potamousis K."/>
            <person name="Apodaca J."/>
            <person name="Anantharaman T.S."/>
            <person name="Lin J."/>
            <person name="Yen G."/>
            <person name="Schwartz D.C."/>
            <person name="Welch R.A."/>
            <person name="Blattner F.R."/>
        </authorList>
    </citation>
    <scope>NUCLEOTIDE SEQUENCE [LARGE SCALE GENOMIC DNA]</scope>
    <source>
        <strain>O157:H7 / EDL933 / ATCC 700927 / EHEC</strain>
    </source>
</reference>
<reference key="2">
    <citation type="journal article" date="2001" name="DNA Res.">
        <title>Complete genome sequence of enterohemorrhagic Escherichia coli O157:H7 and genomic comparison with a laboratory strain K-12.</title>
        <authorList>
            <person name="Hayashi T."/>
            <person name="Makino K."/>
            <person name="Ohnishi M."/>
            <person name="Kurokawa K."/>
            <person name="Ishii K."/>
            <person name="Yokoyama K."/>
            <person name="Han C.-G."/>
            <person name="Ohtsubo E."/>
            <person name="Nakayama K."/>
            <person name="Murata T."/>
            <person name="Tanaka M."/>
            <person name="Tobe T."/>
            <person name="Iida T."/>
            <person name="Takami H."/>
            <person name="Honda T."/>
            <person name="Sasakawa C."/>
            <person name="Ogasawara N."/>
            <person name="Yasunaga T."/>
            <person name="Kuhara S."/>
            <person name="Shiba T."/>
            <person name="Hattori M."/>
            <person name="Shinagawa H."/>
        </authorList>
    </citation>
    <scope>NUCLEOTIDE SEQUENCE [LARGE SCALE GENOMIC DNA]</scope>
    <source>
        <strain>O157:H7 / Sakai / RIMD 0509952 / EHEC</strain>
    </source>
</reference>
<dbReference type="EC" id="2.8.1.-" evidence="1"/>
<dbReference type="EMBL" id="AE005174">
    <property type="protein sequence ID" value="AAG58452.1"/>
    <property type="molecule type" value="Genomic_DNA"/>
</dbReference>
<dbReference type="EMBL" id="BA000007">
    <property type="protein sequence ID" value="BAB37619.1"/>
    <property type="molecule type" value="Genomic_DNA"/>
</dbReference>
<dbReference type="PIR" id="D91153">
    <property type="entry name" value="D91153"/>
</dbReference>
<dbReference type="PIR" id="H85998">
    <property type="entry name" value="H85998"/>
</dbReference>
<dbReference type="RefSeq" id="NP_312223.1">
    <property type="nucleotide sequence ID" value="NC_002695.1"/>
</dbReference>
<dbReference type="RefSeq" id="WP_001209704.1">
    <property type="nucleotide sequence ID" value="NZ_VOAI01000004.1"/>
</dbReference>
<dbReference type="SMR" id="Q8X883"/>
<dbReference type="STRING" id="155864.Z4703"/>
<dbReference type="GeneID" id="915951"/>
<dbReference type="KEGG" id="ece:Z4703"/>
<dbReference type="KEGG" id="ecs:ECs_4196"/>
<dbReference type="PATRIC" id="fig|386585.9.peg.4379"/>
<dbReference type="eggNOG" id="COG1553">
    <property type="taxonomic scope" value="Bacteria"/>
</dbReference>
<dbReference type="HOGENOM" id="CLU_132095_0_0_6"/>
<dbReference type="OMA" id="PYNHQAS"/>
<dbReference type="Proteomes" id="UP000000558">
    <property type="component" value="Chromosome"/>
</dbReference>
<dbReference type="Proteomes" id="UP000002519">
    <property type="component" value="Chromosome"/>
</dbReference>
<dbReference type="GO" id="GO:1990228">
    <property type="term" value="C:sulfurtransferase complex"/>
    <property type="evidence" value="ECO:0007669"/>
    <property type="project" value="TreeGrafter"/>
</dbReference>
<dbReference type="GO" id="GO:0097163">
    <property type="term" value="F:sulfur carrier activity"/>
    <property type="evidence" value="ECO:0007669"/>
    <property type="project" value="TreeGrafter"/>
</dbReference>
<dbReference type="GO" id="GO:0016783">
    <property type="term" value="F:sulfurtransferase activity"/>
    <property type="evidence" value="ECO:0007669"/>
    <property type="project" value="UniProtKB-UniRule"/>
</dbReference>
<dbReference type="GO" id="GO:0002143">
    <property type="term" value="P:tRNA wobble position uridine thiolation"/>
    <property type="evidence" value="ECO:0007669"/>
    <property type="project" value="TreeGrafter"/>
</dbReference>
<dbReference type="FunFam" id="3.40.1260.10:FF:000001">
    <property type="entry name" value="Sulfurtransferase TusD"/>
    <property type="match status" value="1"/>
</dbReference>
<dbReference type="Gene3D" id="3.40.1260.10">
    <property type="entry name" value="DsrEFH-like"/>
    <property type="match status" value="1"/>
</dbReference>
<dbReference type="HAMAP" id="MF_00390">
    <property type="entry name" value="Thiourid_synth_D"/>
    <property type="match status" value="1"/>
</dbReference>
<dbReference type="InterPro" id="IPR027396">
    <property type="entry name" value="DsrEFH-like"/>
</dbReference>
<dbReference type="InterPro" id="IPR003787">
    <property type="entry name" value="Sulphur_relay_DsrE/F-like"/>
</dbReference>
<dbReference type="InterPro" id="IPR017463">
    <property type="entry name" value="Sulphur_relay_TusD/DsrE"/>
</dbReference>
<dbReference type="NCBIfam" id="NF001237">
    <property type="entry name" value="PRK00207.1"/>
    <property type="match status" value="1"/>
</dbReference>
<dbReference type="NCBIfam" id="TIGR03012">
    <property type="entry name" value="sulf_tusD_dsrE"/>
    <property type="match status" value="1"/>
</dbReference>
<dbReference type="PANTHER" id="PTHR34874">
    <property type="entry name" value="PROTEIN YCHN"/>
    <property type="match status" value="1"/>
</dbReference>
<dbReference type="PANTHER" id="PTHR34874:SF3">
    <property type="entry name" value="SULFURTRANSFERASE TUSD"/>
    <property type="match status" value="1"/>
</dbReference>
<dbReference type="Pfam" id="PF02635">
    <property type="entry name" value="DsrE"/>
    <property type="match status" value="1"/>
</dbReference>
<dbReference type="SUPFAM" id="SSF75169">
    <property type="entry name" value="DsrEFH-like"/>
    <property type="match status" value="1"/>
</dbReference>